<gene>
    <name type="primary">FAM153A</name>
    <name type="synonym">KIAA0752</name>
</gene>
<sequence length="310" mass="34712">MVDKDTERDIEMKRQLRRLRELHLYSTWKKYQEAMKTSLGVPQCERDEGSLGKPLCPPEILSETLPGSVKKRVCFPSEDHLEEFIAEHLPEASNQSLLTVAHADAGTQTNGDLEDLEEHGPGQTVSEEATEVHTMEGDPDTLAEFLIRDVLQELSSYNGEEEDPEEVKTSLGVPQRGDLEDLEEHVPGQTVSEEATGVHMMQVDPATLAKSDLEDLEEHVPEQTVSEEATGVHMMQVDPATLAKQLEDSTITGSHQQMSASPSSAPAEEATEKTKVEEEVKTRKPKKKTRKPSKKSRWNVLKCWDIFNIF</sequence>
<feature type="chain" id="PRO_0000318156" description="Protein FAM153A">
    <location>
        <begin position="1"/>
        <end position="310"/>
    </location>
</feature>
<feature type="region of interest" description="Disordered" evidence="1">
    <location>
        <begin position="39"/>
        <end position="58"/>
    </location>
</feature>
<feature type="region of interest" description="Disordered" evidence="1">
    <location>
        <begin position="108"/>
        <end position="136"/>
    </location>
</feature>
<feature type="region of interest" description="Disordered" evidence="1">
    <location>
        <begin position="156"/>
        <end position="184"/>
    </location>
</feature>
<feature type="region of interest" description="Disordered" evidence="1">
    <location>
        <begin position="250"/>
        <end position="297"/>
    </location>
</feature>
<feature type="compositionally biased region" description="Low complexity" evidence="1">
    <location>
        <begin position="259"/>
        <end position="268"/>
    </location>
</feature>
<feature type="compositionally biased region" description="Basic and acidic residues" evidence="1">
    <location>
        <begin position="270"/>
        <end position="282"/>
    </location>
</feature>
<feature type="compositionally biased region" description="Basic residues" evidence="1">
    <location>
        <begin position="283"/>
        <end position="297"/>
    </location>
</feature>
<feature type="sequence conflict" description="In Ref. 1; AAD42863, 2; BAA34472 and 3; BAF82207." evidence="2" ref="1 2 3">
    <original>C</original>
    <variation>R</variation>
    <location>
        <position position="44"/>
    </location>
</feature>
<feature type="sequence conflict" description="In Ref. 1; AAD42863, 2; BAA34472 and 3; BAF82207." evidence="2" ref="1 2 3">
    <original>T</original>
    <variation>M</variation>
    <location>
        <position position="134"/>
    </location>
</feature>
<feature type="sequence conflict" description="In Ref. 3; BAF82207." evidence="2" ref="3">
    <original>G</original>
    <variation>E</variation>
    <location>
        <position position="137"/>
    </location>
</feature>
<feature type="sequence conflict" description="In Ref. 1; AAD42863, 2; BAA34472 and 3; BAF82207." evidence="2" ref="1 2 3">
    <original>F</original>
    <variation>L</variation>
    <location>
        <position position="145"/>
    </location>
</feature>
<accession>Q9UHL3</accession>
<accession>A8K0F3</accession>
<accession>O94852</accession>
<reference key="1">
    <citation type="journal article" date="1999" name="Int. J. Cancer">
        <title>Antigens recognized by autologous antibody in patients with renal-cell carcinoma.</title>
        <authorList>
            <person name="Scanlan M.J."/>
            <person name="Gordan J.D."/>
            <person name="Williamson B."/>
            <person name="Stockert E."/>
            <person name="Bander N.H."/>
            <person name="Jongeneel C.V."/>
            <person name="Gure A.O."/>
            <person name="Jaeger D."/>
            <person name="Jaeger E."/>
            <person name="Knuth A."/>
            <person name="Chen Y.-T."/>
            <person name="Old L.J."/>
        </authorList>
    </citation>
    <scope>NUCLEOTIDE SEQUENCE [MRNA]</scope>
    <scope>IDENTIFICATION AS A RENAL CANCER ANTIGEN</scope>
    <source>
        <tissue>Renal cell carcinoma</tissue>
    </source>
</reference>
<reference key="2">
    <citation type="journal article" date="1998" name="DNA Res.">
        <title>Prediction of the coding sequences of unidentified human genes. XI. The complete sequences of 100 new cDNA clones from brain which code for large proteins in vitro.</title>
        <authorList>
            <person name="Nagase T."/>
            <person name="Ishikawa K."/>
            <person name="Suyama M."/>
            <person name="Kikuno R."/>
            <person name="Miyajima N."/>
            <person name="Tanaka A."/>
            <person name="Kotani H."/>
            <person name="Nomura N."/>
            <person name="Ohara O."/>
        </authorList>
    </citation>
    <scope>NUCLEOTIDE SEQUENCE [LARGE SCALE MRNA]</scope>
    <source>
        <tissue>Brain</tissue>
    </source>
</reference>
<reference key="3">
    <citation type="journal article" date="2004" name="Nat. Genet.">
        <title>Complete sequencing and characterization of 21,243 full-length human cDNAs.</title>
        <authorList>
            <person name="Ota T."/>
            <person name="Suzuki Y."/>
            <person name="Nishikawa T."/>
            <person name="Otsuki T."/>
            <person name="Sugiyama T."/>
            <person name="Irie R."/>
            <person name="Wakamatsu A."/>
            <person name="Hayashi K."/>
            <person name="Sato H."/>
            <person name="Nagai K."/>
            <person name="Kimura K."/>
            <person name="Makita H."/>
            <person name="Sekine M."/>
            <person name="Obayashi M."/>
            <person name="Nishi T."/>
            <person name="Shibahara T."/>
            <person name="Tanaka T."/>
            <person name="Ishii S."/>
            <person name="Yamamoto J."/>
            <person name="Saito K."/>
            <person name="Kawai Y."/>
            <person name="Isono Y."/>
            <person name="Nakamura Y."/>
            <person name="Nagahari K."/>
            <person name="Murakami K."/>
            <person name="Yasuda T."/>
            <person name="Iwayanagi T."/>
            <person name="Wagatsuma M."/>
            <person name="Shiratori A."/>
            <person name="Sudo H."/>
            <person name="Hosoiri T."/>
            <person name="Kaku Y."/>
            <person name="Kodaira H."/>
            <person name="Kondo H."/>
            <person name="Sugawara M."/>
            <person name="Takahashi M."/>
            <person name="Kanda K."/>
            <person name="Yokoi T."/>
            <person name="Furuya T."/>
            <person name="Kikkawa E."/>
            <person name="Omura Y."/>
            <person name="Abe K."/>
            <person name="Kamihara K."/>
            <person name="Katsuta N."/>
            <person name="Sato K."/>
            <person name="Tanikawa M."/>
            <person name="Yamazaki M."/>
            <person name="Ninomiya K."/>
            <person name="Ishibashi T."/>
            <person name="Yamashita H."/>
            <person name="Murakawa K."/>
            <person name="Fujimori K."/>
            <person name="Tanai H."/>
            <person name="Kimata M."/>
            <person name="Watanabe M."/>
            <person name="Hiraoka S."/>
            <person name="Chiba Y."/>
            <person name="Ishida S."/>
            <person name="Ono Y."/>
            <person name="Takiguchi S."/>
            <person name="Watanabe S."/>
            <person name="Yosida M."/>
            <person name="Hotuta T."/>
            <person name="Kusano J."/>
            <person name="Kanehori K."/>
            <person name="Takahashi-Fujii A."/>
            <person name="Hara H."/>
            <person name="Tanase T.-O."/>
            <person name="Nomura Y."/>
            <person name="Togiya S."/>
            <person name="Komai F."/>
            <person name="Hara R."/>
            <person name="Takeuchi K."/>
            <person name="Arita M."/>
            <person name="Imose N."/>
            <person name="Musashino K."/>
            <person name="Yuuki H."/>
            <person name="Oshima A."/>
            <person name="Sasaki N."/>
            <person name="Aotsuka S."/>
            <person name="Yoshikawa Y."/>
            <person name="Matsunawa H."/>
            <person name="Ichihara T."/>
            <person name="Shiohata N."/>
            <person name="Sano S."/>
            <person name="Moriya S."/>
            <person name="Momiyama H."/>
            <person name="Satoh N."/>
            <person name="Takami S."/>
            <person name="Terashima Y."/>
            <person name="Suzuki O."/>
            <person name="Nakagawa S."/>
            <person name="Senoh A."/>
            <person name="Mizoguchi H."/>
            <person name="Goto Y."/>
            <person name="Shimizu F."/>
            <person name="Wakebe H."/>
            <person name="Hishigaki H."/>
            <person name="Watanabe T."/>
            <person name="Sugiyama A."/>
            <person name="Takemoto M."/>
            <person name="Kawakami B."/>
            <person name="Yamazaki M."/>
            <person name="Watanabe K."/>
            <person name="Kumagai A."/>
            <person name="Itakura S."/>
            <person name="Fukuzumi Y."/>
            <person name="Fujimori Y."/>
            <person name="Komiyama M."/>
            <person name="Tashiro H."/>
            <person name="Tanigami A."/>
            <person name="Fujiwara T."/>
            <person name="Ono T."/>
            <person name="Yamada K."/>
            <person name="Fujii Y."/>
            <person name="Ozaki K."/>
            <person name="Hirao M."/>
            <person name="Ohmori Y."/>
            <person name="Kawabata A."/>
            <person name="Hikiji T."/>
            <person name="Kobatake N."/>
            <person name="Inagaki H."/>
            <person name="Ikema Y."/>
            <person name="Okamoto S."/>
            <person name="Okitani R."/>
            <person name="Kawakami T."/>
            <person name="Noguchi S."/>
            <person name="Itoh T."/>
            <person name="Shigeta K."/>
            <person name="Senba T."/>
            <person name="Matsumura K."/>
            <person name="Nakajima Y."/>
            <person name="Mizuno T."/>
            <person name="Morinaga M."/>
            <person name="Sasaki M."/>
            <person name="Togashi T."/>
            <person name="Oyama M."/>
            <person name="Hata H."/>
            <person name="Watanabe M."/>
            <person name="Komatsu T."/>
            <person name="Mizushima-Sugano J."/>
            <person name="Satoh T."/>
            <person name="Shirai Y."/>
            <person name="Takahashi Y."/>
            <person name="Nakagawa K."/>
            <person name="Okumura K."/>
            <person name="Nagase T."/>
            <person name="Nomura N."/>
            <person name="Kikuchi H."/>
            <person name="Masuho Y."/>
            <person name="Yamashita R."/>
            <person name="Nakai K."/>
            <person name="Yada T."/>
            <person name="Nakamura Y."/>
            <person name="Ohara O."/>
            <person name="Isogai T."/>
            <person name="Sugano S."/>
        </authorList>
    </citation>
    <scope>NUCLEOTIDE SEQUENCE [LARGE SCALE MRNA]</scope>
    <source>
        <tissue>Cerebellum</tissue>
    </source>
</reference>
<reference key="4">
    <citation type="journal article" date="2004" name="Nature">
        <title>The DNA sequence and comparative analysis of human chromosome 5.</title>
        <authorList>
            <person name="Schmutz J."/>
            <person name="Martin J."/>
            <person name="Terry A."/>
            <person name="Couronne O."/>
            <person name="Grimwood J."/>
            <person name="Lowry S."/>
            <person name="Gordon L.A."/>
            <person name="Scott D."/>
            <person name="Xie G."/>
            <person name="Huang W."/>
            <person name="Hellsten U."/>
            <person name="Tran-Gyamfi M."/>
            <person name="She X."/>
            <person name="Prabhakar S."/>
            <person name="Aerts A."/>
            <person name="Altherr M."/>
            <person name="Bajorek E."/>
            <person name="Black S."/>
            <person name="Branscomb E."/>
            <person name="Caoile C."/>
            <person name="Challacombe J.F."/>
            <person name="Chan Y.M."/>
            <person name="Denys M."/>
            <person name="Detter J.C."/>
            <person name="Escobar J."/>
            <person name="Flowers D."/>
            <person name="Fotopulos D."/>
            <person name="Glavina T."/>
            <person name="Gomez M."/>
            <person name="Gonzales E."/>
            <person name="Goodstein D."/>
            <person name="Grigoriev I."/>
            <person name="Groza M."/>
            <person name="Hammon N."/>
            <person name="Hawkins T."/>
            <person name="Haydu L."/>
            <person name="Israni S."/>
            <person name="Jett J."/>
            <person name="Kadner K."/>
            <person name="Kimball H."/>
            <person name="Kobayashi A."/>
            <person name="Lopez F."/>
            <person name="Lou Y."/>
            <person name="Martinez D."/>
            <person name="Medina C."/>
            <person name="Morgan J."/>
            <person name="Nandkeshwar R."/>
            <person name="Noonan J.P."/>
            <person name="Pitluck S."/>
            <person name="Pollard M."/>
            <person name="Predki P."/>
            <person name="Priest J."/>
            <person name="Ramirez L."/>
            <person name="Retterer J."/>
            <person name="Rodriguez A."/>
            <person name="Rogers S."/>
            <person name="Salamov A."/>
            <person name="Salazar A."/>
            <person name="Thayer N."/>
            <person name="Tice H."/>
            <person name="Tsai M."/>
            <person name="Ustaszewska A."/>
            <person name="Vo N."/>
            <person name="Wheeler J."/>
            <person name="Wu K."/>
            <person name="Yang J."/>
            <person name="Dickson M."/>
            <person name="Cheng J.-F."/>
            <person name="Eichler E.E."/>
            <person name="Olsen A."/>
            <person name="Pennacchio L.A."/>
            <person name="Rokhsar D.S."/>
            <person name="Richardson P."/>
            <person name="Lucas S.M."/>
            <person name="Myers R.M."/>
            <person name="Rubin E.M."/>
        </authorList>
    </citation>
    <scope>NUCLEOTIDE SEQUENCE [LARGE SCALE GENOMIC DNA]</scope>
</reference>
<protein>
    <recommendedName>
        <fullName>Protein FAM153A</fullName>
    </recommendedName>
    <alternativeName>
        <fullName>Renal carcinoma antigen NY-REN-7</fullName>
    </alternativeName>
</protein>
<name>F153A_HUMAN</name>
<proteinExistence type="evidence at protein level"/>
<organism>
    <name type="scientific">Homo sapiens</name>
    <name type="common">Human</name>
    <dbReference type="NCBI Taxonomy" id="9606"/>
    <lineage>
        <taxon>Eukaryota</taxon>
        <taxon>Metazoa</taxon>
        <taxon>Chordata</taxon>
        <taxon>Craniata</taxon>
        <taxon>Vertebrata</taxon>
        <taxon>Euteleostomi</taxon>
        <taxon>Mammalia</taxon>
        <taxon>Eutheria</taxon>
        <taxon>Euarchontoglires</taxon>
        <taxon>Primates</taxon>
        <taxon>Haplorrhini</taxon>
        <taxon>Catarrhini</taxon>
        <taxon>Hominidae</taxon>
        <taxon>Homo</taxon>
    </lineage>
</organism>
<comment type="interaction">
    <interactant intactId="EBI-2834075">
        <id>Q9UHL3</id>
    </interactant>
    <interactant intactId="EBI-349105">
        <id>P63167</id>
        <label>DYNLL1</label>
    </interactant>
    <organismsDiffer>false</organismsDiffer>
    <experiments>4</experiments>
</comment>
<comment type="interaction">
    <interactant intactId="EBI-2834075">
        <id>Q9UHL3</id>
    </interactant>
    <interactant intactId="EBI-1378139">
        <id>Q9HAT0</id>
        <label>ROPN1</label>
    </interactant>
    <organismsDiffer>false</organismsDiffer>
    <experiments>3</experiments>
</comment>
<comment type="similarity">
    <text evidence="2">Belongs to the FAM153 family.</text>
</comment>
<comment type="sequence caution" evidence="2">
    <conflict type="erroneous initiation">
        <sequence resource="EMBL-CDS" id="BAA34472"/>
    </conflict>
</comment>
<keyword id="KW-1185">Reference proteome</keyword>
<dbReference type="EMBL" id="AF155097">
    <property type="protein sequence ID" value="AAD42863.1"/>
    <property type="molecule type" value="mRNA"/>
</dbReference>
<dbReference type="EMBL" id="AB018295">
    <property type="protein sequence ID" value="BAA34472.1"/>
    <property type="status" value="ALT_INIT"/>
    <property type="molecule type" value="mRNA"/>
</dbReference>
<dbReference type="EMBL" id="AK289518">
    <property type="protein sequence ID" value="BAF82207.1"/>
    <property type="molecule type" value="mRNA"/>
</dbReference>
<dbReference type="EMBL" id="AC140125">
    <property type="status" value="NOT_ANNOTATED_CDS"/>
    <property type="molecule type" value="Genomic_DNA"/>
</dbReference>
<dbReference type="CCDS" id="CCDS34305.1"/>
<dbReference type="RefSeq" id="NP_001400755.1">
    <property type="nucleotide sequence ID" value="NM_001413826.1"/>
</dbReference>
<dbReference type="RefSeq" id="NP_775934.3">
    <property type="nucleotide sequence ID" value="NM_173663.5"/>
</dbReference>
<dbReference type="RefSeq" id="XP_006714911.1">
    <property type="nucleotide sequence ID" value="XM_006714848.3"/>
</dbReference>
<dbReference type="RefSeq" id="XP_006714912.1">
    <property type="nucleotide sequence ID" value="XM_006714849.4"/>
</dbReference>
<dbReference type="RefSeq" id="XP_011532823.1">
    <property type="nucleotide sequence ID" value="XM_011534521.4"/>
</dbReference>
<dbReference type="RefSeq" id="XP_011532824.1">
    <property type="nucleotide sequence ID" value="XM_011534522.2"/>
</dbReference>
<dbReference type="RefSeq" id="XP_011532825.1">
    <property type="nucleotide sequence ID" value="XM_011534523.2"/>
</dbReference>
<dbReference type="RefSeq" id="XP_016864855.1">
    <property type="nucleotide sequence ID" value="XM_017009366.1"/>
</dbReference>
<dbReference type="RefSeq" id="XP_016864856.1">
    <property type="nucleotide sequence ID" value="XM_017009367.1"/>
</dbReference>
<dbReference type="RefSeq" id="XP_016864857.1">
    <property type="nucleotide sequence ID" value="XM_017009368.1"/>
</dbReference>
<dbReference type="RefSeq" id="XP_016864858.1">
    <property type="nucleotide sequence ID" value="XM_017009369.2"/>
</dbReference>
<dbReference type="RefSeq" id="XP_016864859.1">
    <property type="nucleotide sequence ID" value="XM_017009370.1"/>
</dbReference>
<dbReference type="RefSeq" id="XP_016864860.1">
    <property type="nucleotide sequence ID" value="XM_017009371.1"/>
</dbReference>
<dbReference type="RefSeq" id="XP_047273063.1">
    <property type="nucleotide sequence ID" value="XM_047417107.1"/>
</dbReference>
<dbReference type="RefSeq" id="XP_054208385.1">
    <property type="nucleotide sequence ID" value="XM_054352410.1"/>
</dbReference>
<dbReference type="RefSeq" id="XP_054208386.1">
    <property type="nucleotide sequence ID" value="XM_054352411.1"/>
</dbReference>
<dbReference type="RefSeq" id="XP_054208387.1">
    <property type="nucleotide sequence ID" value="XM_054352412.1"/>
</dbReference>
<dbReference type="RefSeq" id="XP_054208388.1">
    <property type="nucleotide sequence ID" value="XM_054352413.1"/>
</dbReference>
<dbReference type="RefSeq" id="XP_054208389.1">
    <property type="nucleotide sequence ID" value="XM_054352414.1"/>
</dbReference>
<dbReference type="BioGRID" id="130152">
    <property type="interactions" value="11"/>
</dbReference>
<dbReference type="FunCoup" id="Q9UHL3">
    <property type="interactions" value="5"/>
</dbReference>
<dbReference type="IntAct" id="Q9UHL3">
    <property type="interactions" value="9"/>
</dbReference>
<dbReference type="STRING" id="9606.ENSP00000411506"/>
<dbReference type="iPTMnet" id="Q9UHL3"/>
<dbReference type="PhosphoSitePlus" id="Q9UHL3"/>
<dbReference type="BioMuta" id="FAM153A"/>
<dbReference type="DMDM" id="229462851"/>
<dbReference type="MassIVE" id="Q9UHL3"/>
<dbReference type="PaxDb" id="9606-ENSP00000411506"/>
<dbReference type="PeptideAtlas" id="Q9UHL3"/>
<dbReference type="Antibodypedia" id="76796">
    <property type="antibodies" value="18 antibodies from 7 providers"/>
</dbReference>
<dbReference type="DNASU" id="285596"/>
<dbReference type="Ensembl" id="ENST00000360669.11">
    <property type="protein sequence ID" value="ENSP00000353887.6"/>
    <property type="gene ID" value="ENSG00000170074.21"/>
</dbReference>
<dbReference type="Ensembl" id="ENST00000440605.7">
    <property type="protein sequence ID" value="ENSP00000411506.3"/>
    <property type="gene ID" value="ENSG00000170074.21"/>
</dbReference>
<dbReference type="Ensembl" id="ENST00000510276.5">
    <property type="protein sequence ID" value="ENSP00000422174.1"/>
    <property type="gene ID" value="ENSG00000170074.21"/>
</dbReference>
<dbReference type="Ensembl" id="ENST00000697105.1">
    <property type="protein sequence ID" value="ENSP00000513111.1"/>
    <property type="gene ID" value="ENSG00000170074.21"/>
</dbReference>
<dbReference type="Ensembl" id="ENST00000697109.1">
    <property type="protein sequence ID" value="ENSP00000513114.1"/>
    <property type="gene ID" value="ENSG00000170074.21"/>
</dbReference>
<dbReference type="Ensembl" id="ENST00000697112.1">
    <property type="protein sequence ID" value="ENSP00000513116.1"/>
    <property type="gene ID" value="ENSG00000170074.21"/>
</dbReference>
<dbReference type="Ensembl" id="ENST00000697113.1">
    <property type="protein sequence ID" value="ENSP00000513117.1"/>
    <property type="gene ID" value="ENSG00000170074.21"/>
</dbReference>
<dbReference type="Ensembl" id="ENST00000697115.1">
    <property type="protein sequence ID" value="ENSP00000513118.1"/>
    <property type="gene ID" value="ENSG00000170074.21"/>
</dbReference>
<dbReference type="Ensembl" id="ENST00000697116.2">
    <property type="protein sequence ID" value="ENSP00000513119.1"/>
    <property type="gene ID" value="ENSG00000170074.21"/>
</dbReference>
<dbReference type="Ensembl" id="ENST00000697117.1">
    <property type="protein sequence ID" value="ENSP00000513120.1"/>
    <property type="gene ID" value="ENSG00000170074.21"/>
</dbReference>
<dbReference type="GeneID" id="285596"/>
<dbReference type="KEGG" id="hsa:285596"/>
<dbReference type="MANE-Select" id="ENST00000697116.2">
    <property type="protein sequence ID" value="ENSP00000513119.1"/>
    <property type="RefSeq nucleotide sequence ID" value="NM_001413826.1"/>
    <property type="RefSeq protein sequence ID" value="NP_001400755.1"/>
</dbReference>
<dbReference type="UCSC" id="uc003mic.4">
    <property type="organism name" value="human"/>
</dbReference>
<dbReference type="AGR" id="HGNC:29940"/>
<dbReference type="CTD" id="285596"/>
<dbReference type="GeneCards" id="FAM153A"/>
<dbReference type="HGNC" id="HGNC:29940">
    <property type="gene designation" value="FAM153A"/>
</dbReference>
<dbReference type="HPA" id="ENSG00000170074">
    <property type="expression patterns" value="Tissue enriched (testis)"/>
</dbReference>
<dbReference type="neXtProt" id="NX_Q9UHL3"/>
<dbReference type="OpenTargets" id="ENSG00000170074"/>
<dbReference type="PharmGKB" id="PA162386535"/>
<dbReference type="VEuPathDB" id="HostDB:ENSG00000170074"/>
<dbReference type="eggNOG" id="ENOG502TEM3">
    <property type="taxonomic scope" value="Eukaryota"/>
</dbReference>
<dbReference type="GeneTree" id="ENSGT00940000166141"/>
<dbReference type="HOGENOM" id="CLU_897039_0_0_1"/>
<dbReference type="InParanoid" id="Q9UHL3"/>
<dbReference type="PAN-GO" id="Q9UHL3">
    <property type="GO annotations" value="0 GO annotations based on evolutionary models"/>
</dbReference>
<dbReference type="PhylomeDB" id="Q9UHL3"/>
<dbReference type="TreeFam" id="TF353284"/>
<dbReference type="PathwayCommons" id="Q9UHL3"/>
<dbReference type="SignaLink" id="Q9UHL3"/>
<dbReference type="BioGRID-ORCS" id="285596">
    <property type="hits" value="15 hits in 1046 CRISPR screens"/>
</dbReference>
<dbReference type="ChiTaRS" id="FAM153A">
    <property type="organism name" value="human"/>
</dbReference>
<dbReference type="GenomeRNAi" id="285596"/>
<dbReference type="Pharos" id="Q9UHL3">
    <property type="development level" value="Tdark"/>
</dbReference>
<dbReference type="PRO" id="PR:Q9UHL3"/>
<dbReference type="Proteomes" id="UP000005640">
    <property type="component" value="Chromosome 5"/>
</dbReference>
<dbReference type="RNAct" id="Q9UHL3">
    <property type="molecule type" value="protein"/>
</dbReference>
<dbReference type="Bgee" id="ENSG00000170074">
    <property type="expression patterns" value="Expressed in right testis and 98 other cell types or tissues"/>
</dbReference>
<dbReference type="ExpressionAtlas" id="Q9UHL3">
    <property type="expression patterns" value="baseline and differential"/>
</dbReference>
<dbReference type="InterPro" id="IPR023249">
    <property type="entry name" value="FAM153"/>
</dbReference>
<dbReference type="PANTHER" id="PTHR40712">
    <property type="entry name" value="FAMILY WITH SEQUENCE SIMILARITY 153 MEMBER C-RELATED"/>
    <property type="match status" value="1"/>
</dbReference>
<dbReference type="PANTHER" id="PTHR40712:SF2">
    <property type="entry name" value="PROTEIN FAM153A-RELATED"/>
    <property type="match status" value="1"/>
</dbReference>
<dbReference type="Pfam" id="PF15722">
    <property type="entry name" value="FAM153"/>
    <property type="match status" value="4"/>
</dbReference>
<dbReference type="PRINTS" id="PR02041">
    <property type="entry name" value="PROTEINF153"/>
</dbReference>
<evidence type="ECO:0000256" key="1">
    <source>
        <dbReference type="SAM" id="MobiDB-lite"/>
    </source>
</evidence>
<evidence type="ECO:0000305" key="2"/>